<sequence>MERVMECDYPASKKNKVVHPMDCEMKEEPTNAASMNQHSLWSQWQLLDSILPTGGFAHSYGLEAAMQSRMVNNPEELRSFVVQVLENTGSLLLPFVCCANKSPDAATWVKLDQLLEAMLTNEVSRKASMSQGSALLRVAASVFTEIQSLQDLRQTFLGSKIVSFHHAPIFGLICGLVGFDSETTQRAYMFVTMRDVISAATRLNLIGPLAASVLQHQVAEDAERMVQKWKDRGVEEATQTSPLLDALQGCHAYMFSRLFCT</sequence>
<reference key="1">
    <citation type="journal article" date="2005" name="Nature">
        <title>The map-based sequence of the rice genome.</title>
        <authorList>
            <consortium name="International rice genome sequencing project (IRGSP)"/>
        </authorList>
    </citation>
    <scope>NUCLEOTIDE SEQUENCE [LARGE SCALE GENOMIC DNA]</scope>
    <source>
        <strain>cv. Nipponbare</strain>
    </source>
</reference>
<reference key="2">
    <citation type="journal article" date="2008" name="Nucleic Acids Res.">
        <title>The rice annotation project database (RAP-DB): 2008 update.</title>
        <authorList>
            <consortium name="The rice annotation project (RAP)"/>
        </authorList>
    </citation>
    <scope>GENOME REANNOTATION</scope>
    <source>
        <strain>cv. Nipponbare</strain>
    </source>
</reference>
<reference key="3">
    <citation type="journal article" date="2013" name="Rice">
        <title>Improvement of the Oryza sativa Nipponbare reference genome using next generation sequence and optical map data.</title>
        <authorList>
            <person name="Kawahara Y."/>
            <person name="de la Bastide M."/>
            <person name="Hamilton J.P."/>
            <person name="Kanamori H."/>
            <person name="McCombie W.R."/>
            <person name="Ouyang S."/>
            <person name="Schwartz D.C."/>
            <person name="Tanaka T."/>
            <person name="Wu J."/>
            <person name="Zhou S."/>
            <person name="Childs K.L."/>
            <person name="Davidson R.M."/>
            <person name="Lin H."/>
            <person name="Quesada-Ocampo L."/>
            <person name="Vaillancourt B."/>
            <person name="Sakai H."/>
            <person name="Lee S.S."/>
            <person name="Kim J."/>
            <person name="Numa H."/>
            <person name="Itoh T."/>
            <person name="Buell C.R."/>
            <person name="Matsumoto T."/>
        </authorList>
    </citation>
    <scope>GENOME REANNOTATION</scope>
    <source>
        <strain>cv. Nipponbare</strain>
    </source>
</reference>
<reference key="4">
    <citation type="journal article" date="2003" name="Science">
        <title>Collection, mapping, and annotation of over 28,000 cDNA clones from japonica rice.</title>
        <authorList>
            <consortium name="The rice full-length cDNA consortium"/>
        </authorList>
    </citation>
    <scope>NUCLEOTIDE SEQUENCE [LARGE SCALE MRNA]</scope>
    <source>
        <strain>cv. Nipponbare</strain>
    </source>
</reference>
<dbReference type="EMBL" id="AP005804">
    <property type="status" value="NOT_ANNOTATED_CDS"/>
    <property type="molecule type" value="Genomic_DNA"/>
</dbReference>
<dbReference type="EMBL" id="AP008208">
    <property type="protein sequence ID" value="BAF07923.1"/>
    <property type="status" value="ALT_INIT"/>
    <property type="molecule type" value="Genomic_DNA"/>
</dbReference>
<dbReference type="EMBL" id="AP014958">
    <property type="protein sequence ID" value="BAS77170.1"/>
    <property type="molecule type" value="Genomic_DNA"/>
</dbReference>
<dbReference type="EMBL" id="AK106654">
    <property type="protein sequence ID" value="BAG97786.1"/>
    <property type="status" value="ALT_INIT"/>
    <property type="molecule type" value="mRNA"/>
</dbReference>
<dbReference type="RefSeq" id="XP_015626164.1">
    <property type="nucleotide sequence ID" value="XM_015770678.1"/>
</dbReference>
<dbReference type="RefSeq" id="XP_015626166.1">
    <property type="nucleotide sequence ID" value="XM_015770680.1"/>
</dbReference>
<dbReference type="RefSeq" id="XP_015626167.1">
    <property type="nucleotide sequence ID" value="XM_015770681.1"/>
</dbReference>
<dbReference type="SMR" id="Q0E3L5"/>
<dbReference type="FunCoup" id="Q0E3L5">
    <property type="interactions" value="16"/>
</dbReference>
<dbReference type="STRING" id="39947.Q0E3L5"/>
<dbReference type="PaxDb" id="39947-Q0E3L5"/>
<dbReference type="EnsemblPlants" id="Os02t0168000-01">
    <property type="protein sequence ID" value="Os02t0168000-01"/>
    <property type="gene ID" value="Os02g0168000"/>
</dbReference>
<dbReference type="Gramene" id="Os02t0168000-01">
    <property type="protein sequence ID" value="Os02t0168000-01"/>
    <property type="gene ID" value="Os02g0168000"/>
</dbReference>
<dbReference type="KEGG" id="dosa:Os02g0168000"/>
<dbReference type="eggNOG" id="ENOG502REVQ">
    <property type="taxonomic scope" value="Eukaryota"/>
</dbReference>
<dbReference type="HOGENOM" id="CLU_049215_1_0_1"/>
<dbReference type="InParanoid" id="Q0E3L5"/>
<dbReference type="OrthoDB" id="2550922at2759"/>
<dbReference type="Proteomes" id="UP000000763">
    <property type="component" value="Chromosome 2"/>
</dbReference>
<dbReference type="Proteomes" id="UP000059680">
    <property type="component" value="Chromosome 2"/>
</dbReference>
<dbReference type="ExpressionAtlas" id="Q0E3L5">
    <property type="expression patterns" value="baseline and differential"/>
</dbReference>
<dbReference type="GO" id="GO:0016151">
    <property type="term" value="F:nickel cation binding"/>
    <property type="evidence" value="ECO:0007669"/>
    <property type="project" value="InterPro"/>
</dbReference>
<dbReference type="FunFam" id="1.10.4190.10:FF:000001">
    <property type="entry name" value="Urease accessory protein F"/>
    <property type="match status" value="1"/>
</dbReference>
<dbReference type="Gene3D" id="1.10.4190.10">
    <property type="entry name" value="Urease accessory protein UreF"/>
    <property type="match status" value="1"/>
</dbReference>
<dbReference type="HAMAP" id="MF_01385">
    <property type="entry name" value="UreF"/>
    <property type="match status" value="1"/>
</dbReference>
<dbReference type="InterPro" id="IPR002639">
    <property type="entry name" value="UreF"/>
</dbReference>
<dbReference type="InterPro" id="IPR038277">
    <property type="entry name" value="UreF_sf"/>
</dbReference>
<dbReference type="PANTHER" id="PTHR33620">
    <property type="entry name" value="UREASE ACCESSORY PROTEIN F"/>
    <property type="match status" value="1"/>
</dbReference>
<dbReference type="PANTHER" id="PTHR33620:SF1">
    <property type="entry name" value="UREASE ACCESSORY PROTEIN F"/>
    <property type="match status" value="1"/>
</dbReference>
<dbReference type="Pfam" id="PF01730">
    <property type="entry name" value="UreF"/>
    <property type="match status" value="1"/>
</dbReference>
<dbReference type="PIRSF" id="PIRSF009467">
    <property type="entry name" value="Ureas_acces_UreF"/>
    <property type="match status" value="1"/>
</dbReference>
<keyword id="KW-0143">Chaperone</keyword>
<keyword id="KW-0996">Nickel insertion</keyword>
<keyword id="KW-1185">Reference proteome</keyword>
<evidence type="ECO:0000250" key="1"/>
<evidence type="ECO:0000305" key="2"/>
<organism>
    <name type="scientific">Oryza sativa subsp. japonica</name>
    <name type="common">Rice</name>
    <dbReference type="NCBI Taxonomy" id="39947"/>
    <lineage>
        <taxon>Eukaryota</taxon>
        <taxon>Viridiplantae</taxon>
        <taxon>Streptophyta</taxon>
        <taxon>Embryophyta</taxon>
        <taxon>Tracheophyta</taxon>
        <taxon>Spermatophyta</taxon>
        <taxon>Magnoliopsida</taxon>
        <taxon>Liliopsida</taxon>
        <taxon>Poales</taxon>
        <taxon>Poaceae</taxon>
        <taxon>BOP clade</taxon>
        <taxon>Oryzoideae</taxon>
        <taxon>Oryzeae</taxon>
        <taxon>Oryzinae</taxon>
        <taxon>Oryza</taxon>
        <taxon>Oryza sativa</taxon>
    </lineage>
</organism>
<proteinExistence type="evidence at transcript level"/>
<comment type="function">
    <text evidence="1">Required for the maturation and activation of urease via the functional incorporation of the urease nickel metallocenter.</text>
</comment>
<comment type="subunit">
    <text evidence="1">URED, UREF and UREG may form a complex that acts as a GTP-hydrolysis-dependent molecular chaperone, activating the urease apoprotein.</text>
</comment>
<comment type="similarity">
    <text evidence="2">Belongs to the UreF family.</text>
</comment>
<comment type="sequence caution" evidence="2">
    <conflict type="erroneous initiation">
        <sequence resource="EMBL-CDS" id="BAF07923"/>
    </conflict>
    <text>Extended N-terminus.</text>
</comment>
<comment type="sequence caution" evidence="2">
    <conflict type="erroneous initiation">
        <sequence resource="EMBL-CDS" id="BAG97786"/>
    </conflict>
    <text>Extended N-terminus.</text>
</comment>
<name>UREF_ORYSJ</name>
<gene>
    <name type="primary">UREF</name>
    <name type="ordered locus">Os02g0168000</name>
    <name type="ordered locus">LOC_Os02g07150</name>
    <name type="ORF">OSJNBa0085K21</name>
</gene>
<feature type="chain" id="PRO_0000424254" description="Urease accessory protein F">
    <location>
        <begin position="1"/>
        <end position="261"/>
    </location>
</feature>
<protein>
    <recommendedName>
        <fullName>Urease accessory protein F</fullName>
        <shortName>AtUREF</shortName>
    </recommendedName>
</protein>
<accession>Q0E3L5</accession>
<accession>A0A0P0VFB7</accession>